<protein>
    <recommendedName>
        <fullName>Snaclec 4</fullName>
    </recommendedName>
    <alternativeName>
        <fullName>C-type lectin 4</fullName>
        <shortName>CTL-4</shortName>
    </alternativeName>
</protein>
<comment type="function">
    <text evidence="1">Interferes with one step of hemostasis (modulation of platelet aggregation, or coagulation cascade, for example).</text>
</comment>
<comment type="subunit">
    <text evidence="1">Heterodimer; disulfide-linked.</text>
</comment>
<comment type="subcellular location">
    <subcellularLocation>
        <location evidence="1">Secreted</location>
    </subcellularLocation>
</comment>
<comment type="tissue specificity">
    <text>Expressed by the venom gland.</text>
</comment>
<comment type="PTM">
    <text>Contains disulfide bonds.</text>
</comment>
<comment type="miscellaneous">
    <text>Shows greater sequence similarity to the beta than alpha subunits compared to other heterodimer snaclecs.</text>
</comment>
<comment type="similarity">
    <text evidence="4">Belongs to the snaclec family.</text>
</comment>
<proteinExistence type="evidence at transcript level"/>
<keyword id="KW-1015">Disulfide bond</keyword>
<keyword id="KW-1199">Hemostasis impairing toxin</keyword>
<keyword id="KW-0964">Secreted</keyword>
<keyword id="KW-0732">Signal</keyword>
<keyword id="KW-0800">Toxin</keyword>
<organism>
    <name type="scientific">Echis pyramidum leakeyi</name>
    <name type="common">Leakey's carpet viper</name>
    <name type="synonym">Echis carinatus leakeyi</name>
    <dbReference type="NCBI Taxonomy" id="38415"/>
    <lineage>
        <taxon>Eukaryota</taxon>
        <taxon>Metazoa</taxon>
        <taxon>Chordata</taxon>
        <taxon>Craniata</taxon>
        <taxon>Vertebrata</taxon>
        <taxon>Euteleostomi</taxon>
        <taxon>Lepidosauria</taxon>
        <taxon>Squamata</taxon>
        <taxon>Bifurcata</taxon>
        <taxon>Unidentata</taxon>
        <taxon>Episquamata</taxon>
        <taxon>Toxicofera</taxon>
        <taxon>Serpentes</taxon>
        <taxon>Colubroidea</taxon>
        <taxon>Viperidae</taxon>
        <taxon>Viperinae</taxon>
        <taxon>Echis</taxon>
    </lineage>
</organism>
<sequence>MGRFIFVSFSLLVVFFSLSGTEAGVCCPLGWSGYDQNCYKAFEELMNWADAEKFCTQQHKGSHLVSLHNIAEADFVVKKIVSVLKDGVIWMGLNDVWNECNWGWTDGAQLDYKAWNVESNCFIFKTAENHLVTYGLQWDTQFRLQEPG</sequence>
<name>SL4_ECHPL</name>
<dbReference type="EMBL" id="AY254338">
    <property type="protein sequence ID" value="AAQ01219.1"/>
    <property type="molecule type" value="mRNA"/>
</dbReference>
<dbReference type="SMR" id="Q6X5S2"/>
<dbReference type="GO" id="GO:0005576">
    <property type="term" value="C:extracellular region"/>
    <property type="evidence" value="ECO:0007669"/>
    <property type="project" value="UniProtKB-SubCell"/>
</dbReference>
<dbReference type="GO" id="GO:0090729">
    <property type="term" value="F:toxin activity"/>
    <property type="evidence" value="ECO:0007669"/>
    <property type="project" value="UniProtKB-KW"/>
</dbReference>
<dbReference type="FunFam" id="3.10.100.10:FF:000087">
    <property type="entry name" value="Snaclec rhodocetin subunit delta"/>
    <property type="match status" value="1"/>
</dbReference>
<dbReference type="Gene3D" id="3.10.100.10">
    <property type="entry name" value="Mannose-Binding Protein A, subunit A"/>
    <property type="match status" value="1"/>
</dbReference>
<dbReference type="InterPro" id="IPR001304">
    <property type="entry name" value="C-type_lectin-like"/>
</dbReference>
<dbReference type="InterPro" id="IPR016186">
    <property type="entry name" value="C-type_lectin-like/link_sf"/>
</dbReference>
<dbReference type="InterPro" id="IPR050111">
    <property type="entry name" value="C-type_lectin/snaclec_domain"/>
</dbReference>
<dbReference type="InterPro" id="IPR016187">
    <property type="entry name" value="CTDL_fold"/>
</dbReference>
<dbReference type="PANTHER" id="PTHR22803">
    <property type="entry name" value="MANNOSE, PHOSPHOLIPASE, LECTIN RECEPTOR RELATED"/>
    <property type="match status" value="1"/>
</dbReference>
<dbReference type="Pfam" id="PF00059">
    <property type="entry name" value="Lectin_C"/>
    <property type="match status" value="1"/>
</dbReference>
<dbReference type="PRINTS" id="PR01504">
    <property type="entry name" value="PNCREATITSAP"/>
</dbReference>
<dbReference type="SMART" id="SM00034">
    <property type="entry name" value="CLECT"/>
    <property type="match status" value="1"/>
</dbReference>
<dbReference type="SUPFAM" id="SSF56436">
    <property type="entry name" value="C-type lectin-like"/>
    <property type="match status" value="1"/>
</dbReference>
<dbReference type="PROSITE" id="PS50041">
    <property type="entry name" value="C_TYPE_LECTIN_2"/>
    <property type="match status" value="1"/>
</dbReference>
<feature type="signal peptide" evidence="2">
    <location>
        <begin position="1"/>
        <end position="23"/>
    </location>
</feature>
<feature type="chain" id="PRO_0000355275" description="Snaclec 4">
    <location>
        <begin position="24"/>
        <end position="148"/>
    </location>
</feature>
<feature type="domain" description="C-type lectin" evidence="3">
    <location>
        <begin position="34"/>
        <end position="148"/>
    </location>
</feature>
<reference key="1">
    <citation type="journal article" date="2003" name="Gene">
        <title>Novel sequences encoding venom C-type lectins are conserved in phylogenetically and geographically distinct Echis and Bitis viper species.</title>
        <authorList>
            <person name="Harrison R.A."/>
            <person name="Oliver J."/>
            <person name="Hasson S.S."/>
            <person name="Bharati K."/>
            <person name="Theakston R.D.G."/>
        </authorList>
    </citation>
    <scope>NUCLEOTIDE SEQUENCE [MRNA]</scope>
    <source>
        <tissue>Venom gland</tissue>
    </source>
</reference>
<evidence type="ECO:0000250" key="1"/>
<evidence type="ECO:0000255" key="2"/>
<evidence type="ECO:0000255" key="3">
    <source>
        <dbReference type="PROSITE-ProRule" id="PRU00040"/>
    </source>
</evidence>
<evidence type="ECO:0000305" key="4"/>
<accession>Q6X5S2</accession>